<feature type="initiator methionine" description="Removed" evidence="5">
    <location>
        <position position="1"/>
    </location>
</feature>
<feature type="chain" id="PRO_0000418872" description="Benzylsuccinate synthase alpha subunit">
    <location>
        <begin position="2"/>
        <end position="861"/>
    </location>
</feature>
<feature type="domain" description="PFL" evidence="2">
    <location>
        <begin position="40"/>
        <end position="712"/>
    </location>
</feature>
<feature type="domain" description="Glycine radical" evidence="1">
    <location>
        <begin position="731"/>
        <end position="850"/>
    </location>
</feature>
<feature type="region of interest" description="Disordered" evidence="3">
    <location>
        <begin position="718"/>
        <end position="744"/>
    </location>
</feature>
<feature type="modified residue" description="Glycine radical" evidence="1">
    <location>
        <position position="825"/>
    </location>
</feature>
<evidence type="ECO:0000255" key="1">
    <source>
        <dbReference type="PROSITE-ProRule" id="PRU00493"/>
    </source>
</evidence>
<evidence type="ECO:0000255" key="2">
    <source>
        <dbReference type="PROSITE-ProRule" id="PRU00887"/>
    </source>
</evidence>
<evidence type="ECO:0000256" key="3">
    <source>
        <dbReference type="SAM" id="MobiDB-lite"/>
    </source>
</evidence>
<evidence type="ECO:0000269" key="4">
    <source>
    </source>
</evidence>
<evidence type="ECO:0000269" key="5">
    <source>
    </source>
</evidence>
<evidence type="ECO:0000269" key="6">
    <source>
    </source>
</evidence>
<evidence type="ECO:0000305" key="7"/>
<comment type="function">
    <text evidence="5">Catalyzes the addition of fumarate to the methyl group of toluene, leading to the formation of benzylsuccinate.</text>
</comment>
<comment type="catalytic activity">
    <reaction evidence="5">
        <text>toluene + fumarate = 2-benzylsuccinate</text>
        <dbReference type="Rhea" id="RHEA:10416"/>
        <dbReference type="ChEBI" id="CHEBI:17578"/>
        <dbReference type="ChEBI" id="CHEBI:29806"/>
        <dbReference type="ChEBI" id="CHEBI:57621"/>
        <dbReference type="EC" id="4.1.99.11"/>
    </reaction>
</comment>
<comment type="activity regulation">
    <text evidence="5">Activated by the benzylsuccinate synthase activating enzyme BssD. Rapidly inactivated by oxygen.</text>
</comment>
<comment type="biophysicochemical properties">
    <phDependence>
        <text evidence="5">Optimum pH is 8.0.</text>
    </phDependence>
</comment>
<comment type="pathway">
    <text evidence="5">Xenobiotic degradation; toluene degradation.</text>
</comment>
<comment type="subunit">
    <text evidence="5">Heterohexamer composed of 2 alpha subunits, 2 beta subunits and 2 gamma subunits.</text>
</comment>
<comment type="induction">
    <text evidence="4 5 6">Induced by toluene, probably via the TdiR/TdiS two-component regulatory system.</text>
</comment>
<comment type="similarity">
    <text evidence="7">Belongs to the glycyl radical enzyme (GRE) family. BSS subfamily.</text>
</comment>
<sequence length="861" mass="97736">MSDVQTLEYKGKVVQFAPENPREAEIPADELHEHLQNPSTERTRRLKARCRWKHAAAGEFCEKGVTAGIERMRLLTESHWATRGEPEPIRRAHGLKNILDKSTLVLQTDEFIVGYHAEDPNMFPLYPELSYMAVQDYLKSKYSPQPAKEAQEIVDYWKPFSLQARCEPYFDPVDLHRGYQVSTIEGPVFATGYNSVIPPYETVLEDGLQARIALAEEKIEHARAEMEKFPWHAPSGLEWIDKIDNWKAMVIACKAVIAWARRHARLCKIVAEHFETDPKRKAELLEIADICQRMPAEPARGLKDAMQSKWFTFLICHAIERYASGFAQKEDSLLWPYYKASVIDKTFQPMEHKDAVELIEMERLKVSEHGAGKSRAYREIFPGSNDLFILTLGGTNGDGSDACNDMTDAILEATKRIRTTEPSIVFRYSKKNRAKTLRWVFECIRDGLGYPSIKHNELGVQQMLEMAKYSRNGNGATPEEAHYWVNVLCMAPGLAGRRKAQKTRSEGGSAIFPAKLLEITLNNGYDWSYADMQMGPETGYAKDFATFDQLWEAFRKQYQYAIALAIRCKDVSRTMECRFLQMPFVSALDDGCMELGMDANALSEQPNGWHNPITSIVAGNSLVAIKKLIYDEKKYTMAQLMDALQANWEGYEEMRRDFKNAPKWGNDDDDADVLISRFYEEILGGEMMKNINYSGGPVKPTGQAVGLYMEVGSRTGPTPDGRFGGEAADDGGISPYSGTDKKGPTAVLRSVSKVQKNQKANLLNQRLSVPIMRSKHGFDIWHAYMDTWHDLNIDHVQFNVVSTEEMKAAQREPEKHQDLIVRVSGFSARFVDIPTYGQNTIIARNEQNFNAQDLEFLNVEL</sequence>
<dbReference type="EC" id="4.1.99.11"/>
<dbReference type="EMBL" id="AJ001848">
    <property type="protein sequence ID" value="CAA05052.1"/>
    <property type="molecule type" value="Genomic_DNA"/>
</dbReference>
<dbReference type="SMR" id="O87943"/>
<dbReference type="KEGG" id="ag:CAA05052"/>
<dbReference type="BioCyc" id="MetaCyc:MONOMER-670"/>
<dbReference type="BRENDA" id="4.1.99.11">
    <property type="organism ID" value="6271"/>
</dbReference>
<dbReference type="UniPathway" id="UPA00273"/>
<dbReference type="GO" id="GO:0005829">
    <property type="term" value="C:cytosol"/>
    <property type="evidence" value="ECO:0007669"/>
    <property type="project" value="TreeGrafter"/>
</dbReference>
<dbReference type="GO" id="GO:0018805">
    <property type="term" value="F:benzylsuccinate synthase activity"/>
    <property type="evidence" value="ECO:0007669"/>
    <property type="project" value="UniProtKB-EC"/>
</dbReference>
<dbReference type="GO" id="GO:0042203">
    <property type="term" value="P:toluene catabolic process"/>
    <property type="evidence" value="ECO:0007669"/>
    <property type="project" value="UniProtKB-UniPathway"/>
</dbReference>
<dbReference type="CDD" id="cd01677">
    <property type="entry name" value="PFL2_DhaB_BssA"/>
    <property type="match status" value="1"/>
</dbReference>
<dbReference type="Gene3D" id="3.20.70.20">
    <property type="match status" value="1"/>
</dbReference>
<dbReference type="InterPro" id="IPR001150">
    <property type="entry name" value="Gly_radical"/>
</dbReference>
<dbReference type="InterPro" id="IPR051215">
    <property type="entry name" value="GRE"/>
</dbReference>
<dbReference type="InterPro" id="IPR004184">
    <property type="entry name" value="PFL_dom"/>
</dbReference>
<dbReference type="PANTHER" id="PTHR43641:SF2">
    <property type="entry name" value="DEHYDRATASE YBIW-RELATED"/>
    <property type="match status" value="1"/>
</dbReference>
<dbReference type="PANTHER" id="PTHR43641">
    <property type="entry name" value="FORMATE ACETYLTRANSFERASE 3-RELATED"/>
    <property type="match status" value="1"/>
</dbReference>
<dbReference type="Pfam" id="PF01228">
    <property type="entry name" value="Gly_radical"/>
    <property type="match status" value="1"/>
</dbReference>
<dbReference type="Pfam" id="PF02901">
    <property type="entry name" value="PFL-like"/>
    <property type="match status" value="1"/>
</dbReference>
<dbReference type="SUPFAM" id="SSF51998">
    <property type="entry name" value="PFL-like glycyl radical enzymes"/>
    <property type="match status" value="1"/>
</dbReference>
<dbReference type="PROSITE" id="PS51149">
    <property type="entry name" value="GLY_RADICAL_2"/>
    <property type="match status" value="1"/>
</dbReference>
<dbReference type="PROSITE" id="PS51554">
    <property type="entry name" value="PFL"/>
    <property type="match status" value="1"/>
</dbReference>
<protein>
    <recommendedName>
        <fullName>Benzylsuccinate synthase alpha subunit</fullName>
        <ecNumber>4.1.99.11</ecNumber>
    </recommendedName>
</protein>
<accession>O87943</accession>
<proteinExistence type="evidence at protein level"/>
<name>BSSA_THAAR</name>
<keyword id="KW-0058">Aromatic hydrocarbons catabolism</keyword>
<keyword id="KW-0903">Direct protein sequencing</keyword>
<keyword id="KW-0456">Lyase</keyword>
<keyword id="KW-0556">Organic radical</keyword>
<organism>
    <name type="scientific">Thauera aromatica</name>
    <dbReference type="NCBI Taxonomy" id="59405"/>
    <lineage>
        <taxon>Bacteria</taxon>
        <taxon>Pseudomonadati</taxon>
        <taxon>Pseudomonadota</taxon>
        <taxon>Betaproteobacteria</taxon>
        <taxon>Rhodocyclales</taxon>
        <taxon>Zoogloeaceae</taxon>
        <taxon>Thauera</taxon>
    </lineage>
</organism>
<gene>
    <name type="primary">bssA</name>
</gene>
<reference key="1">
    <citation type="journal article" date="1998" name="Mol. Microbiol.">
        <title>Biochemical and genetic characterization of benzylsuccinate synthase from Thauera aromatica: a new glycyl radical enzyme catalysing the first step in anaerobic toluene metabolism.</title>
        <authorList>
            <person name="Leuthner B."/>
            <person name="Leutwein C."/>
            <person name="Schulz H."/>
            <person name="Horth P."/>
            <person name="Haehnel W."/>
            <person name="Schiltz E."/>
            <person name="Schagger H."/>
            <person name="Heider J."/>
        </authorList>
    </citation>
    <scope>NUCLEOTIDE SEQUENCE [GENOMIC DNA]</scope>
    <scope>PROTEIN SEQUENCE OF 2-31</scope>
    <scope>FUNCTION</scope>
    <scope>CATALYTIC ACTIVITY</scope>
    <scope>ACTIVITY REGULATION</scope>
    <scope>BIOPHYSICOCHEMICAL PROPERTIES</scope>
    <scope>PATHWAY</scope>
    <scope>SUBUNIT</scope>
    <scope>INDUCTION</scope>
    <source>
        <strain>DSM 6984 / CIP 107765 / K172</strain>
    </source>
</reference>
<reference key="2">
    <citation type="journal article" date="1998" name="FEMS Microbiol. Lett.">
        <title>A two-component system involved in regulation of anaerobic toluene metabolism in Thauera aromatica.</title>
        <authorList>
            <person name="Leuthner B."/>
            <person name="Heider J."/>
        </authorList>
    </citation>
    <scope>INDUCTION</scope>
    <source>
        <strain>DSM 6984 / CIP 107765 / K172</strain>
    </source>
</reference>
<reference key="3">
    <citation type="journal article" date="2002" name="Arch. Microbiol.">
        <title>Operon structure and expression of the genes for benzylsuccinate synthase in Thauera aromatica strain K172.</title>
        <authorList>
            <person name="Hermuth K."/>
            <person name="Leuthner B."/>
            <person name="Heider J."/>
        </authorList>
    </citation>
    <scope>INDUCTION</scope>
    <source>
        <strain>DSM 6984 / CIP 107765 / K172</strain>
    </source>
</reference>